<feature type="chain" id="PRO_0000073009" description="Vacuolar protein sorting-associated protein 26A">
    <location>
        <begin position="1"/>
        <end position="327"/>
    </location>
</feature>
<feature type="region of interest" description="Disordered" evidence="3">
    <location>
        <begin position="306"/>
        <end position="327"/>
    </location>
</feature>
<feature type="compositionally biased region" description="Polar residues" evidence="3">
    <location>
        <begin position="316"/>
        <end position="327"/>
    </location>
</feature>
<feature type="modified residue" description="Phosphoserine" evidence="5">
    <location>
        <position position="315"/>
    </location>
</feature>
<comment type="function">
    <text evidence="1 2">Acts as a component of the retromer cargo-selective complex (CSC). The CSC is believed to be the core functional component of retromer or respective retromer complex variants acting to prevent missorting of selected transmembrane cargo proteins into the lysosomal degradation pathway. The recruitment of the CSC to the endosomal membrane involves RAB7A and SNX3. The SNX-BAR retromer mediates retrograde transport of cargo proteins from endosomes to the trans-Golgi network (TGN) and is involved in endosome-to-plasma membrane transport for cargo protein recycling. The SNX3-retromer mediates the retrograde endosome-to-TGN transport of WLS distinct from the SNX-BAR retromer pathway. The SNX27-retromer is believed to be involved in endosome-to-plasma membrane trafficking and recycling of a broad spectrum of cargo proteins. The CSC complex seems to act as recruitment hub for other proteins, such as the WASH complex and TBC1D5. Required for retrograde transport of lysosomal enzyme receptor IGF2R. Required to regulate transcytosis of the polymeric immunoglobulin receptor (pIgR-pIgA). Required for the endosomal localization of WASHC2 (indicative for the WASH complex). Required for the endosomal localization of TBC1D5. Mediates retromer cargo recognition of SORL1 and is involved in trafficking of SORL1 implicated in sorting and processing of APP. Involved in retromer-independent lysosomal sorting of F2R. Involved in recycling of ADRB2. Acts redundantly with VSP26B in SNX-27 mediated endocytic recycling of SLC2A1/GLUT1. Enhances the affinity of SNX27 for PDZ-binding motifs in cargo proteins (By similarity).</text>
</comment>
<comment type="subunit">
    <text evidence="1 2">Component of the heterotrimeric retromer cargo-selective complex (CSC), also described as vacuolar protein sorting subcomplex (VPS), formed by VPS26 (VPS26A or VPS26B), VPS29 and VPS35. The CSC has a highly elongated structure with VPS26 and VPS29 binding independently at opposite distal ends of VPS35 as central platform. The CSC is believed to associate with variable sorting nexins to form functionally distinct retromer complex variants. The originally described retromer complex (also called SNX-BAR retromer) is a pentamer containing the CSC and a heterodimeric membrane-deforming subcomplex formed between SNX1 or SNX2 and SNX5 or SNX6 (also called SNX-BAR subcomplex); the respective CSC and SNX-BAR subcomplexes associate with low affinity. The CSC associates with SNX3 to form a SNX3-retromer complex. The CSC associates with SNX27, the WASH complex and the SNX-BAR subcomplex to form the SNX27-retromer complex. Interacts with VPS29, VPS35, SNX27, SNX1, SNX2, SNX5, SNX6, SNX3, RAB7A, ECPAS, EHD1, WASHC5, SORL1 (By similarity).</text>
</comment>
<comment type="subcellular location">
    <subcellularLocation>
        <location evidence="2">Cytoplasm</location>
    </subcellularLocation>
    <subcellularLocation>
        <location evidence="2">Endosome membrane</location>
        <topology evidence="2">Peripheral membrane protein</topology>
    </subcellularLocation>
    <subcellularLocation>
        <location evidence="1">Early endosome</location>
    </subcellularLocation>
    <text evidence="1">Localizes to tubular profiles adjacent to endosomes. Predominantly found in early not late endosomes.</text>
</comment>
<comment type="similarity">
    <text evidence="4">Belongs to the VPS26 family.</text>
</comment>
<sequence length="327" mass="38115">MSFLGGFFGPICEIDVALSDGETRKMAEMKTEDGKVEKHYLFYDGESVSGKVNLAFKQPGKRLEHQGIRIEFVGQIELFNDKSNTHEFVNLVKELALPGELTQSRSYDFEFMQVEKPYESYIGANVRLRYFLKVTIVRRLTDLVKEYDLIVHQLATYPEVNNSIKMEVGIEDCLHIEFEYNKSKYHLKDVIVGKIYFLLVRIKIQHMELQLIKKEITGIGPSTTTETETIAKYEIMDGAPVKGESIPIRLFLAGYDPTPTMRDVNKKFSVRYFLNLVLVDEEDRRYFKQQEIILWRKAPEKLRKQRTNFHQRFESPESQASAEQPEM</sequence>
<keyword id="KW-0963">Cytoplasm</keyword>
<keyword id="KW-0967">Endosome</keyword>
<keyword id="KW-0472">Membrane</keyword>
<keyword id="KW-0597">Phosphoprotein</keyword>
<keyword id="KW-0653">Protein transport</keyword>
<keyword id="KW-1185">Reference proteome</keyword>
<keyword id="KW-0813">Transport</keyword>
<accession>Q6AY86</accession>
<dbReference type="EMBL" id="BC079150">
    <property type="protein sequence ID" value="AAH79150.1"/>
    <property type="molecule type" value="mRNA"/>
</dbReference>
<dbReference type="RefSeq" id="NP_001007741.1">
    <property type="nucleotide sequence ID" value="NM_001007740.1"/>
</dbReference>
<dbReference type="SMR" id="Q6AY86"/>
<dbReference type="BioGRID" id="263007">
    <property type="interactions" value="1"/>
</dbReference>
<dbReference type="CORUM" id="Q6AY86"/>
<dbReference type="FunCoup" id="Q6AY86">
    <property type="interactions" value="3476"/>
</dbReference>
<dbReference type="IntAct" id="Q6AY86">
    <property type="interactions" value="3"/>
</dbReference>
<dbReference type="STRING" id="10116.ENSRNOP00000062170"/>
<dbReference type="GlyGen" id="Q6AY86">
    <property type="glycosylation" value="1 site"/>
</dbReference>
<dbReference type="iPTMnet" id="Q6AY86"/>
<dbReference type="PhosphoSitePlus" id="Q6AY86"/>
<dbReference type="jPOST" id="Q6AY86"/>
<dbReference type="PaxDb" id="10116-ENSRNOP00000062170"/>
<dbReference type="DNASU" id="361846"/>
<dbReference type="Ensembl" id="ENSRNOT00000081916.2">
    <property type="protein sequence ID" value="ENSRNOP00000070391.2"/>
    <property type="gene ID" value="ENSRNOG00000030683.6"/>
</dbReference>
<dbReference type="GeneID" id="361846"/>
<dbReference type="KEGG" id="rno:361846"/>
<dbReference type="UCSC" id="RGD:1359254">
    <property type="organism name" value="rat"/>
</dbReference>
<dbReference type="AGR" id="RGD:1359254"/>
<dbReference type="CTD" id="9559"/>
<dbReference type="RGD" id="1359254">
    <property type="gene designation" value="Vps26a"/>
</dbReference>
<dbReference type="eggNOG" id="KOG3063">
    <property type="taxonomic scope" value="Eukaryota"/>
</dbReference>
<dbReference type="GeneTree" id="ENSGT00950000183064"/>
<dbReference type="HOGENOM" id="CLU_031077_0_0_1"/>
<dbReference type="InParanoid" id="Q6AY86"/>
<dbReference type="OrthoDB" id="3821113at2759"/>
<dbReference type="PhylomeDB" id="Q6AY86"/>
<dbReference type="Reactome" id="R-RNO-3238698">
    <property type="pathway name" value="WNT ligand biogenesis and trafficking"/>
</dbReference>
<dbReference type="PRO" id="PR:Q6AY86"/>
<dbReference type="Proteomes" id="UP000002494">
    <property type="component" value="Chromosome 20"/>
</dbReference>
<dbReference type="Bgee" id="ENSRNOG00000030683">
    <property type="expression patterns" value="Expressed in testis and 18 other cell types or tissues"/>
</dbReference>
<dbReference type="ExpressionAtlas" id="Q6AY86">
    <property type="expression patterns" value="baseline and differential"/>
</dbReference>
<dbReference type="GO" id="GO:0005829">
    <property type="term" value="C:cytosol"/>
    <property type="evidence" value="ECO:0000314"/>
    <property type="project" value="UniProtKB"/>
</dbReference>
<dbReference type="GO" id="GO:0005769">
    <property type="term" value="C:early endosome"/>
    <property type="evidence" value="ECO:0000250"/>
    <property type="project" value="UniProtKB"/>
</dbReference>
<dbReference type="GO" id="GO:0005768">
    <property type="term" value="C:endosome"/>
    <property type="evidence" value="ECO:0000250"/>
    <property type="project" value="UniProtKB"/>
</dbReference>
<dbReference type="GO" id="GO:0010008">
    <property type="term" value="C:endosome membrane"/>
    <property type="evidence" value="ECO:0000266"/>
    <property type="project" value="RGD"/>
</dbReference>
<dbReference type="GO" id="GO:0030904">
    <property type="term" value="C:retromer complex"/>
    <property type="evidence" value="ECO:0000314"/>
    <property type="project" value="ParkinsonsUK-UCL"/>
</dbReference>
<dbReference type="GO" id="GO:0030906">
    <property type="term" value="C:retromer, cargo-selective complex"/>
    <property type="evidence" value="ECO:0000266"/>
    <property type="project" value="RGD"/>
</dbReference>
<dbReference type="GO" id="GO:0097422">
    <property type="term" value="C:tubular endosome"/>
    <property type="evidence" value="ECO:0000250"/>
    <property type="project" value="UniProtKB"/>
</dbReference>
<dbReference type="GO" id="GO:0031982">
    <property type="term" value="C:vesicle"/>
    <property type="evidence" value="ECO:0000250"/>
    <property type="project" value="UniProtKB"/>
</dbReference>
<dbReference type="GO" id="GO:0032456">
    <property type="term" value="P:endocytic recycling"/>
    <property type="evidence" value="ECO:0000250"/>
    <property type="project" value="UniProtKB"/>
</dbReference>
<dbReference type="GO" id="GO:0006886">
    <property type="term" value="P:intracellular protein transport"/>
    <property type="evidence" value="ECO:0000318"/>
    <property type="project" value="GO_Central"/>
</dbReference>
<dbReference type="GO" id="GO:0042147">
    <property type="term" value="P:retrograde transport, endosome to Golgi"/>
    <property type="evidence" value="ECO:0000250"/>
    <property type="project" value="UniProtKB"/>
</dbReference>
<dbReference type="FunFam" id="2.60.40.640:FF:000001">
    <property type="entry name" value="Vacuolar protein sorting-associated protein 26A"/>
    <property type="match status" value="1"/>
</dbReference>
<dbReference type="FunFam" id="2.60.40.640:FF:000002">
    <property type="entry name" value="Vacuolar protein sorting-associated protein 26A"/>
    <property type="match status" value="1"/>
</dbReference>
<dbReference type="Gene3D" id="2.60.40.640">
    <property type="match status" value="2"/>
</dbReference>
<dbReference type="InterPro" id="IPR014752">
    <property type="entry name" value="Arrestin-like_C"/>
</dbReference>
<dbReference type="InterPro" id="IPR028934">
    <property type="entry name" value="Vps26-related"/>
</dbReference>
<dbReference type="PANTHER" id="PTHR12233">
    <property type="entry name" value="VACUOLAR PROTEIN SORTING 26 RELATED"/>
    <property type="match status" value="1"/>
</dbReference>
<dbReference type="Pfam" id="PF03643">
    <property type="entry name" value="Vps26"/>
    <property type="match status" value="1"/>
</dbReference>
<organism>
    <name type="scientific">Rattus norvegicus</name>
    <name type="common">Rat</name>
    <dbReference type="NCBI Taxonomy" id="10116"/>
    <lineage>
        <taxon>Eukaryota</taxon>
        <taxon>Metazoa</taxon>
        <taxon>Chordata</taxon>
        <taxon>Craniata</taxon>
        <taxon>Vertebrata</taxon>
        <taxon>Euteleostomi</taxon>
        <taxon>Mammalia</taxon>
        <taxon>Eutheria</taxon>
        <taxon>Euarchontoglires</taxon>
        <taxon>Glires</taxon>
        <taxon>Rodentia</taxon>
        <taxon>Myomorpha</taxon>
        <taxon>Muroidea</taxon>
        <taxon>Muridae</taxon>
        <taxon>Murinae</taxon>
        <taxon>Rattus</taxon>
    </lineage>
</organism>
<name>VP26A_RAT</name>
<reference key="1">
    <citation type="journal article" date="2004" name="Genome Res.">
        <title>The status, quality, and expansion of the NIH full-length cDNA project: the Mammalian Gene Collection (MGC).</title>
        <authorList>
            <consortium name="The MGC Project Team"/>
        </authorList>
    </citation>
    <scope>NUCLEOTIDE SEQUENCE [LARGE SCALE MRNA]</scope>
    <source>
        <tissue>Kidney</tissue>
    </source>
</reference>
<reference key="2">
    <citation type="journal article" date="2012" name="Nat. Commun.">
        <title>Quantitative maps of protein phosphorylation sites across 14 different rat organs and tissues.</title>
        <authorList>
            <person name="Lundby A."/>
            <person name="Secher A."/>
            <person name="Lage K."/>
            <person name="Nordsborg N.B."/>
            <person name="Dmytriyev A."/>
            <person name="Lundby C."/>
            <person name="Olsen J.V."/>
        </authorList>
    </citation>
    <scope>PHOSPHORYLATION [LARGE SCALE ANALYSIS] AT SER-315</scope>
    <scope>IDENTIFICATION BY MASS SPECTROMETRY [LARGE SCALE ANALYSIS]</scope>
</reference>
<evidence type="ECO:0000250" key="1">
    <source>
        <dbReference type="UniProtKB" id="O75436"/>
    </source>
</evidence>
<evidence type="ECO:0000250" key="2">
    <source>
        <dbReference type="UniProtKB" id="P40336"/>
    </source>
</evidence>
<evidence type="ECO:0000256" key="3">
    <source>
        <dbReference type="SAM" id="MobiDB-lite"/>
    </source>
</evidence>
<evidence type="ECO:0000305" key="4"/>
<evidence type="ECO:0007744" key="5">
    <source>
    </source>
</evidence>
<gene>
    <name type="primary">Vps26a</name>
    <name type="synonym">Vps26</name>
</gene>
<protein>
    <recommendedName>
        <fullName>Vacuolar protein sorting-associated protein 26A</fullName>
    </recommendedName>
    <alternativeName>
        <fullName>Vesicle protein sorting 26A</fullName>
    </alternativeName>
</protein>
<proteinExistence type="evidence at protein level"/>